<proteinExistence type="inferred from homology"/>
<accession>P46539</accession>
<sequence>MNRLAVELPGLSLKNPIMPASGCFGFGREYARFYDLSVLGAIMIKATTKEPRFGNPTPRVAETPGGMLNAIGLQNPGLDKVLEEELPWLEQFDVPIIANIAGSTVEEYVEVAEAISKAPNVHALELNISCPNVKKGGIAFGTVPDVAAELTRLVKEVAAVPVYVNVSPNVTDIVAMAKAIEQAGADGLTMINTLVGMRIDVKTGRPILANGTGGLSGPAVKPIAIRMIYEVSQAVSIPIIGMGGIQTAEDVLEFFYAGASAVAVGTANFVDPFVCPTIIADLPALLDDLGIGHISECIGRSWKTGAHAVHCRA</sequence>
<reference key="1">
    <citation type="journal article" date="1994" name="Microbiology">
        <title>Molecular characterization of pyrimidine biosynthesis genes from the thermophile Bacillus caldolyticus.</title>
        <authorList>
            <person name="Ghim S.Y."/>
            <person name="Nielsen P."/>
            <person name="Neuhard J."/>
        </authorList>
    </citation>
    <scope>NUCLEOTIDE SEQUENCE [GENOMIC DNA]</scope>
    <source>
        <strain>DSM 405 / NBRC 15313 / YP-T</strain>
    </source>
</reference>
<dbReference type="EC" id="1.3.1.14"/>
<dbReference type="EMBL" id="X73308">
    <property type="protein sequence ID" value="CAA51741.1"/>
    <property type="molecule type" value="Genomic_DNA"/>
</dbReference>
<dbReference type="PIR" id="I40171">
    <property type="entry name" value="I40171"/>
</dbReference>
<dbReference type="SMR" id="P46539"/>
<dbReference type="UniPathway" id="UPA00070">
    <property type="reaction ID" value="UER00945"/>
</dbReference>
<dbReference type="GO" id="GO:0005737">
    <property type="term" value="C:cytoplasm"/>
    <property type="evidence" value="ECO:0007669"/>
    <property type="project" value="UniProtKB-SubCell"/>
</dbReference>
<dbReference type="GO" id="GO:0004589">
    <property type="term" value="F:dihydroorotate dehydrogenase (NAD+) activity"/>
    <property type="evidence" value="ECO:0007669"/>
    <property type="project" value="UniProtKB-EC"/>
</dbReference>
<dbReference type="GO" id="GO:0006207">
    <property type="term" value="P:'de novo' pyrimidine nucleobase biosynthetic process"/>
    <property type="evidence" value="ECO:0007669"/>
    <property type="project" value="InterPro"/>
</dbReference>
<dbReference type="GO" id="GO:0044205">
    <property type="term" value="P:'de novo' UMP biosynthetic process"/>
    <property type="evidence" value="ECO:0007669"/>
    <property type="project" value="UniProtKB-UniRule"/>
</dbReference>
<dbReference type="CDD" id="cd04740">
    <property type="entry name" value="DHOD_1B_like"/>
    <property type="match status" value="1"/>
</dbReference>
<dbReference type="FunFam" id="3.20.20.70:FF:000069">
    <property type="entry name" value="Dihydroorotate dehydrogenase"/>
    <property type="match status" value="1"/>
</dbReference>
<dbReference type="Gene3D" id="3.20.20.70">
    <property type="entry name" value="Aldolase class I"/>
    <property type="match status" value="1"/>
</dbReference>
<dbReference type="HAMAP" id="MF_00224">
    <property type="entry name" value="DHO_dh_type1"/>
    <property type="match status" value="1"/>
</dbReference>
<dbReference type="InterPro" id="IPR013785">
    <property type="entry name" value="Aldolase_TIM"/>
</dbReference>
<dbReference type="InterPro" id="IPR050074">
    <property type="entry name" value="DHO_dehydrogenase"/>
</dbReference>
<dbReference type="InterPro" id="IPR033888">
    <property type="entry name" value="DHOD_1B"/>
</dbReference>
<dbReference type="InterPro" id="IPR024920">
    <property type="entry name" value="Dihydroorotate_DH_1"/>
</dbReference>
<dbReference type="InterPro" id="IPR012135">
    <property type="entry name" value="Dihydroorotate_DH_1_2"/>
</dbReference>
<dbReference type="InterPro" id="IPR005720">
    <property type="entry name" value="Dihydroorotate_DH_cat"/>
</dbReference>
<dbReference type="InterPro" id="IPR001295">
    <property type="entry name" value="Dihydroorotate_DH_CS"/>
</dbReference>
<dbReference type="InterPro" id="IPR049622">
    <property type="entry name" value="Dihydroorotate_DH_I"/>
</dbReference>
<dbReference type="NCBIfam" id="NF005574">
    <property type="entry name" value="PRK07259.1"/>
    <property type="match status" value="1"/>
</dbReference>
<dbReference type="NCBIfam" id="TIGR01037">
    <property type="entry name" value="pyrD_sub1_fam"/>
    <property type="match status" value="1"/>
</dbReference>
<dbReference type="PANTHER" id="PTHR48109:SF1">
    <property type="entry name" value="DIHYDROOROTATE DEHYDROGENASE (FUMARATE)"/>
    <property type="match status" value="1"/>
</dbReference>
<dbReference type="PANTHER" id="PTHR48109">
    <property type="entry name" value="DIHYDROOROTATE DEHYDROGENASE (QUINONE), MITOCHONDRIAL-RELATED"/>
    <property type="match status" value="1"/>
</dbReference>
<dbReference type="Pfam" id="PF01180">
    <property type="entry name" value="DHO_dh"/>
    <property type="match status" value="1"/>
</dbReference>
<dbReference type="PIRSF" id="PIRSF000164">
    <property type="entry name" value="DHO_oxidase"/>
    <property type="match status" value="1"/>
</dbReference>
<dbReference type="SUPFAM" id="SSF51395">
    <property type="entry name" value="FMN-linked oxidoreductases"/>
    <property type="match status" value="1"/>
</dbReference>
<dbReference type="PROSITE" id="PS00911">
    <property type="entry name" value="DHODEHASE_1"/>
    <property type="match status" value="1"/>
</dbReference>
<dbReference type="PROSITE" id="PS00912">
    <property type="entry name" value="DHODEHASE_2"/>
    <property type="match status" value="1"/>
</dbReference>
<keyword id="KW-0963">Cytoplasm</keyword>
<keyword id="KW-0285">Flavoprotein</keyword>
<keyword id="KW-0288">FMN</keyword>
<keyword id="KW-0520">NAD</keyword>
<keyword id="KW-0560">Oxidoreductase</keyword>
<keyword id="KW-0665">Pyrimidine biosynthesis</keyword>
<comment type="function">
    <text evidence="1">Catalyzes the conversion of dihydroorotate to orotate with NAD(+) as electron acceptor.</text>
</comment>
<comment type="catalytic activity">
    <reaction>
        <text>(S)-dihydroorotate + NAD(+) = orotate + NADH + H(+)</text>
        <dbReference type="Rhea" id="RHEA:13513"/>
        <dbReference type="ChEBI" id="CHEBI:15378"/>
        <dbReference type="ChEBI" id="CHEBI:30839"/>
        <dbReference type="ChEBI" id="CHEBI:30864"/>
        <dbReference type="ChEBI" id="CHEBI:57540"/>
        <dbReference type="ChEBI" id="CHEBI:57945"/>
        <dbReference type="EC" id="1.3.1.14"/>
    </reaction>
</comment>
<comment type="cofactor">
    <cofactor evidence="1">
        <name>FMN</name>
        <dbReference type="ChEBI" id="CHEBI:58210"/>
    </cofactor>
    <text evidence="1">Binds 1 FMN per subunit.</text>
</comment>
<comment type="pathway">
    <text>Pyrimidine metabolism; UMP biosynthesis via de novo pathway; orotate from (S)-dihydroorotate (NAD(+) route): step 1/1.</text>
</comment>
<comment type="subunit">
    <text evidence="1">Heterotetramer of 2 PyrK and 2 PyrD type B subunits.</text>
</comment>
<comment type="subcellular location">
    <subcellularLocation>
        <location evidence="1">Cytoplasm</location>
    </subcellularLocation>
</comment>
<comment type="similarity">
    <text evidence="2">Belongs to the dihydroorotate dehydrogenase family. Type 1 subfamily.</text>
</comment>
<name>PYRDB_BACCL</name>
<feature type="chain" id="PRO_0000148387" description="Dihydroorotate dehydrogenase B (NAD(+)), catalytic subunit">
    <location>
        <begin position="1"/>
        <end position="313"/>
    </location>
</feature>
<feature type="active site" description="Nucleophile">
    <location>
        <position position="130"/>
    </location>
</feature>
<feature type="binding site" evidence="1">
    <location>
        <position position="21"/>
    </location>
    <ligand>
        <name>FMN</name>
        <dbReference type="ChEBI" id="CHEBI:58210"/>
    </ligand>
</feature>
<feature type="binding site" evidence="1">
    <location>
        <begin position="45"/>
        <end position="46"/>
    </location>
    <ligand>
        <name>FMN</name>
        <dbReference type="ChEBI" id="CHEBI:58210"/>
    </ligand>
</feature>
<feature type="binding site" evidence="1">
    <location>
        <position position="45"/>
    </location>
    <ligand>
        <name>substrate</name>
    </ligand>
</feature>
<feature type="binding site" evidence="1">
    <location>
        <begin position="69"/>
        <end position="73"/>
    </location>
    <ligand>
        <name>substrate</name>
    </ligand>
</feature>
<feature type="binding site" evidence="1">
    <location>
        <position position="99"/>
    </location>
    <ligand>
        <name>FMN</name>
        <dbReference type="ChEBI" id="CHEBI:58210"/>
    </ligand>
</feature>
<feature type="binding site" evidence="1">
    <location>
        <position position="127"/>
    </location>
    <ligand>
        <name>FMN</name>
        <dbReference type="ChEBI" id="CHEBI:58210"/>
    </ligand>
</feature>
<feature type="binding site" evidence="1">
    <location>
        <position position="127"/>
    </location>
    <ligand>
        <name>substrate</name>
    </ligand>
</feature>
<feature type="binding site" evidence="1">
    <location>
        <position position="191"/>
    </location>
    <ligand>
        <name>FMN</name>
        <dbReference type="ChEBI" id="CHEBI:58210"/>
    </ligand>
</feature>
<feature type="binding site" evidence="1">
    <location>
        <begin position="192"/>
        <end position="193"/>
    </location>
    <ligand>
        <name>substrate</name>
    </ligand>
</feature>
<feature type="binding site" evidence="1">
    <location>
        <position position="217"/>
    </location>
    <ligand>
        <name>FMN</name>
        <dbReference type="ChEBI" id="CHEBI:58210"/>
    </ligand>
</feature>
<feature type="binding site" evidence="1">
    <location>
        <begin position="243"/>
        <end position="244"/>
    </location>
    <ligand>
        <name>FMN</name>
        <dbReference type="ChEBI" id="CHEBI:58210"/>
    </ligand>
</feature>
<feature type="binding site" evidence="1">
    <location>
        <begin position="265"/>
        <end position="266"/>
    </location>
    <ligand>
        <name>FMN</name>
        <dbReference type="ChEBI" id="CHEBI:58210"/>
    </ligand>
</feature>
<organism>
    <name type="scientific">Bacillus caldolyticus</name>
    <dbReference type="NCBI Taxonomy" id="1394"/>
    <lineage>
        <taxon>Bacteria</taxon>
        <taxon>Bacillati</taxon>
        <taxon>Bacillota</taxon>
        <taxon>Bacilli</taxon>
        <taxon>Bacillales</taxon>
        <taxon>Anoxybacillaceae</taxon>
        <taxon>Geobacillus</taxon>
        <taxon>Geobacillus thermoleovorans group</taxon>
    </lineage>
</organism>
<evidence type="ECO:0000250" key="1"/>
<evidence type="ECO:0000305" key="2"/>
<gene>
    <name type="primary">pyrD</name>
</gene>
<protein>
    <recommendedName>
        <fullName>Dihydroorotate dehydrogenase B (NAD(+)), catalytic subunit</fullName>
        <shortName>DHOD B</shortName>
        <shortName>DHODase B</shortName>
        <shortName>DHOdehase B</shortName>
        <ecNumber>1.3.1.14</ecNumber>
    </recommendedName>
    <alternativeName>
        <fullName>Dihydroorotate oxidase B</fullName>
    </alternativeName>
    <alternativeName>
        <fullName>Orotate reductase (NADH)</fullName>
    </alternativeName>
</protein>